<gene>
    <name evidence="13" type="primary">ZMYND10</name>
    <name evidence="11" type="synonym">BLU</name>
    <name type="ORF">LUCA12.4</name>
</gene>
<keyword id="KW-0002">3D-structure</keyword>
<keyword id="KW-0025">Alternative splicing</keyword>
<keyword id="KW-1003">Cell membrane</keyword>
<keyword id="KW-1186">Ciliopathy</keyword>
<keyword id="KW-0963">Cytoplasm</keyword>
<keyword id="KW-0206">Cytoskeleton</keyword>
<keyword id="KW-0225">Disease variant</keyword>
<keyword id="KW-1012">Kartagener syndrome</keyword>
<keyword id="KW-0472">Membrane</keyword>
<keyword id="KW-0479">Metal-binding</keyword>
<keyword id="KW-0990">Primary ciliary dyskinesia</keyword>
<keyword id="KW-1267">Proteomics identification</keyword>
<keyword id="KW-1185">Reference proteome</keyword>
<keyword id="KW-0862">Zinc</keyword>
<keyword id="KW-0863">Zinc-finger</keyword>
<dbReference type="EMBL" id="U70824">
    <property type="protein sequence ID" value="AAC24726.1"/>
    <property type="molecule type" value="mRNA"/>
</dbReference>
<dbReference type="EMBL" id="U70880">
    <property type="protein sequence ID" value="AAC24728.1"/>
    <property type="molecule type" value="mRNA"/>
</dbReference>
<dbReference type="EMBL" id="AL833828">
    <property type="protein sequence ID" value="CAD38688.1"/>
    <property type="molecule type" value="mRNA"/>
</dbReference>
<dbReference type="EMBL" id="AK096525">
    <property type="protein sequence ID" value="BAG53316.1"/>
    <property type="molecule type" value="mRNA"/>
</dbReference>
<dbReference type="EMBL" id="AK223343">
    <property type="protein sequence ID" value="BAD97063.1"/>
    <property type="molecule type" value="mRNA"/>
</dbReference>
<dbReference type="EMBL" id="AC002481">
    <property type="protein sequence ID" value="AAB67311.1"/>
    <property type="status" value="ALT_SEQ"/>
    <property type="molecule type" value="Genomic_DNA"/>
</dbReference>
<dbReference type="EMBL" id="CH471055">
    <property type="protein sequence ID" value="EAW65104.1"/>
    <property type="molecule type" value="Genomic_DNA"/>
</dbReference>
<dbReference type="EMBL" id="BC033732">
    <property type="protein sequence ID" value="AAH33732.1"/>
    <property type="molecule type" value="mRNA"/>
</dbReference>
<dbReference type="CCDS" id="CCDS2825.1">
    <molecule id="O75800-1"/>
</dbReference>
<dbReference type="CCDS" id="CCDS77747.1">
    <molecule id="O75800-2"/>
</dbReference>
<dbReference type="RefSeq" id="NP_001295308.1">
    <molecule id="O75800-2"/>
    <property type="nucleotide sequence ID" value="NM_001308379.2"/>
</dbReference>
<dbReference type="RefSeq" id="NP_056980.2">
    <molecule id="O75800-1"/>
    <property type="nucleotide sequence ID" value="NM_015896.3"/>
</dbReference>
<dbReference type="PDB" id="2D8Q">
    <property type="method" value="NMR"/>
    <property type="chains" value="A=384-440"/>
</dbReference>
<dbReference type="PDB" id="2DAN">
    <property type="method" value="NMR"/>
    <property type="chains" value="A=384-430"/>
</dbReference>
<dbReference type="PDBsum" id="2D8Q"/>
<dbReference type="PDBsum" id="2DAN"/>
<dbReference type="BMRB" id="O75800"/>
<dbReference type="SMR" id="O75800"/>
<dbReference type="BioGRID" id="119499">
    <property type="interactions" value="21"/>
</dbReference>
<dbReference type="CORUM" id="O75800"/>
<dbReference type="FunCoup" id="O75800">
    <property type="interactions" value="34"/>
</dbReference>
<dbReference type="IntAct" id="O75800">
    <property type="interactions" value="18"/>
</dbReference>
<dbReference type="MINT" id="O75800"/>
<dbReference type="STRING" id="9606.ENSP00000231749"/>
<dbReference type="iPTMnet" id="O75800"/>
<dbReference type="PhosphoSitePlus" id="O75800"/>
<dbReference type="BioMuta" id="ZMYND10"/>
<dbReference type="MassIVE" id="O75800"/>
<dbReference type="PaxDb" id="9606-ENSP00000231749"/>
<dbReference type="PeptideAtlas" id="O75800"/>
<dbReference type="ProteomicsDB" id="50200">
    <molecule id="O75800-1"/>
</dbReference>
<dbReference type="ProteomicsDB" id="50201">
    <molecule id="O75800-2"/>
</dbReference>
<dbReference type="Antibodypedia" id="30915">
    <property type="antibodies" value="183 antibodies from 27 providers"/>
</dbReference>
<dbReference type="DNASU" id="51364"/>
<dbReference type="Ensembl" id="ENST00000231749.8">
    <molecule id="O75800-1"/>
    <property type="protein sequence ID" value="ENSP00000231749.3"/>
    <property type="gene ID" value="ENSG00000004838.14"/>
</dbReference>
<dbReference type="Ensembl" id="ENST00000360165.7">
    <molecule id="O75800-2"/>
    <property type="protein sequence ID" value="ENSP00000353289.3"/>
    <property type="gene ID" value="ENSG00000004838.14"/>
</dbReference>
<dbReference type="GeneID" id="51364"/>
<dbReference type="KEGG" id="hsa:51364"/>
<dbReference type="MANE-Select" id="ENST00000231749.8">
    <property type="protein sequence ID" value="ENSP00000231749.3"/>
    <property type="RefSeq nucleotide sequence ID" value="NM_015896.4"/>
    <property type="RefSeq protein sequence ID" value="NP_056980.2"/>
</dbReference>
<dbReference type="UCSC" id="uc003dag.2">
    <molecule id="O75800-1"/>
    <property type="organism name" value="human"/>
</dbReference>
<dbReference type="AGR" id="HGNC:19412"/>
<dbReference type="CTD" id="51364"/>
<dbReference type="DisGeNET" id="51364"/>
<dbReference type="GeneCards" id="ZMYND10"/>
<dbReference type="GeneReviews" id="ZMYND10"/>
<dbReference type="HGNC" id="HGNC:19412">
    <property type="gene designation" value="ZMYND10"/>
</dbReference>
<dbReference type="HPA" id="ENSG00000004838">
    <property type="expression patterns" value="Group enriched (choroid plexus, fallopian tube, testis)"/>
</dbReference>
<dbReference type="MalaCards" id="ZMYND10"/>
<dbReference type="MIM" id="607070">
    <property type="type" value="gene"/>
</dbReference>
<dbReference type="MIM" id="615444">
    <property type="type" value="phenotype"/>
</dbReference>
<dbReference type="neXtProt" id="NX_O75800"/>
<dbReference type="OpenTargets" id="ENSG00000004838"/>
<dbReference type="Orphanet" id="244">
    <property type="disease" value="Primary ciliary dyskinesia"/>
</dbReference>
<dbReference type="PharmGKB" id="PA134981649"/>
<dbReference type="VEuPathDB" id="HostDB:ENSG00000004838"/>
<dbReference type="eggNOG" id="ENOG502QS3F">
    <property type="taxonomic scope" value="Eukaryota"/>
</dbReference>
<dbReference type="GeneTree" id="ENSGT00940000153820"/>
<dbReference type="HOGENOM" id="CLU_034036_1_0_1"/>
<dbReference type="InParanoid" id="O75800"/>
<dbReference type="OMA" id="LIHEAYC"/>
<dbReference type="OrthoDB" id="432970at2759"/>
<dbReference type="PAN-GO" id="O75800">
    <property type="GO annotations" value="5 GO annotations based on evolutionary models"/>
</dbReference>
<dbReference type="PhylomeDB" id="O75800"/>
<dbReference type="TreeFam" id="TF324215"/>
<dbReference type="PathwayCommons" id="O75800"/>
<dbReference type="SignaLink" id="O75800"/>
<dbReference type="BioGRID-ORCS" id="51364">
    <property type="hits" value="33 hits in 1143 CRISPR screens"/>
</dbReference>
<dbReference type="EvolutionaryTrace" id="O75800"/>
<dbReference type="GeneWiki" id="ZMYND10"/>
<dbReference type="GenomeRNAi" id="51364"/>
<dbReference type="Pharos" id="O75800">
    <property type="development level" value="Tbio"/>
</dbReference>
<dbReference type="PRO" id="PR:O75800"/>
<dbReference type="Proteomes" id="UP000005640">
    <property type="component" value="Chromosome 3"/>
</dbReference>
<dbReference type="RNAct" id="O75800">
    <property type="molecule type" value="protein"/>
</dbReference>
<dbReference type="Bgee" id="ENSG00000004838">
    <property type="expression patterns" value="Expressed in right uterine tube and 106 other cell types or tissues"/>
</dbReference>
<dbReference type="ExpressionAtlas" id="O75800">
    <property type="expression patterns" value="baseline and differential"/>
</dbReference>
<dbReference type="GO" id="GO:0016324">
    <property type="term" value="C:apical plasma membrane"/>
    <property type="evidence" value="ECO:0000250"/>
    <property type="project" value="UniProtKB"/>
</dbReference>
<dbReference type="GO" id="GO:0034451">
    <property type="term" value="C:centriolar satellite"/>
    <property type="evidence" value="ECO:0000250"/>
    <property type="project" value="UniProtKB"/>
</dbReference>
<dbReference type="GO" id="GO:0005737">
    <property type="term" value="C:cytoplasm"/>
    <property type="evidence" value="ECO:0000314"/>
    <property type="project" value="LIFEdb"/>
</dbReference>
<dbReference type="GO" id="GO:0120293">
    <property type="term" value="C:dynein axonemal particle"/>
    <property type="evidence" value="ECO:0000250"/>
    <property type="project" value="UniProtKB"/>
</dbReference>
<dbReference type="GO" id="GO:0060090">
    <property type="term" value="F:molecular adaptor activity"/>
    <property type="evidence" value="ECO:0007669"/>
    <property type="project" value="Ensembl"/>
</dbReference>
<dbReference type="GO" id="GO:0044183">
    <property type="term" value="F:protein folding chaperone"/>
    <property type="evidence" value="ECO:0007669"/>
    <property type="project" value="Ensembl"/>
</dbReference>
<dbReference type="GO" id="GO:0008270">
    <property type="term" value="F:zinc ion binding"/>
    <property type="evidence" value="ECO:0007669"/>
    <property type="project" value="UniProtKB-KW"/>
</dbReference>
<dbReference type="GO" id="GO:0003341">
    <property type="term" value="P:cilium movement"/>
    <property type="evidence" value="ECO:0007669"/>
    <property type="project" value="Ensembl"/>
</dbReference>
<dbReference type="GO" id="GO:0036159">
    <property type="term" value="P:inner dynein arm assembly"/>
    <property type="evidence" value="ECO:0000315"/>
    <property type="project" value="UniProtKB"/>
</dbReference>
<dbReference type="GO" id="GO:0044458">
    <property type="term" value="P:motile cilium assembly"/>
    <property type="evidence" value="ECO:0000315"/>
    <property type="project" value="UniProtKB"/>
</dbReference>
<dbReference type="GO" id="GO:0036158">
    <property type="term" value="P:outer dynein arm assembly"/>
    <property type="evidence" value="ECO:0000315"/>
    <property type="project" value="UniProtKB"/>
</dbReference>
<dbReference type="GO" id="GO:1905505">
    <property type="term" value="P:positive regulation of motile cilium assembly"/>
    <property type="evidence" value="ECO:0000250"/>
    <property type="project" value="UniProtKB"/>
</dbReference>
<dbReference type="GO" id="GO:0061512">
    <property type="term" value="P:protein localization to cilium"/>
    <property type="evidence" value="ECO:0007669"/>
    <property type="project" value="Ensembl"/>
</dbReference>
<dbReference type="FunFam" id="6.10.140.2220:FF:000009">
    <property type="entry name" value="Zinc finger MYND domain-containing protein 10"/>
    <property type="match status" value="1"/>
</dbReference>
<dbReference type="Gene3D" id="6.10.140.2220">
    <property type="match status" value="1"/>
</dbReference>
<dbReference type="InterPro" id="IPR017333">
    <property type="entry name" value="UCP037948_Znf-MYND"/>
</dbReference>
<dbReference type="InterPro" id="IPR052298">
    <property type="entry name" value="ZMYND10"/>
</dbReference>
<dbReference type="InterPro" id="IPR002893">
    <property type="entry name" value="Znf_MYND"/>
</dbReference>
<dbReference type="PANTHER" id="PTHR13244">
    <property type="entry name" value="ZINC FINGER MYND DOMAIN CONTAINING PROTEIN 10"/>
    <property type="match status" value="1"/>
</dbReference>
<dbReference type="PANTHER" id="PTHR13244:SF7">
    <property type="entry name" value="ZINC FINGER MYND DOMAIN-CONTAINING PROTEIN 10"/>
    <property type="match status" value="1"/>
</dbReference>
<dbReference type="Pfam" id="PF01753">
    <property type="entry name" value="zf-MYND"/>
    <property type="match status" value="1"/>
</dbReference>
<dbReference type="PIRSF" id="PIRSF037948">
    <property type="entry name" value="UCP037948_Znf_MYND10"/>
    <property type="match status" value="1"/>
</dbReference>
<dbReference type="SUPFAM" id="SSF144232">
    <property type="entry name" value="HIT/MYND zinc finger-like"/>
    <property type="match status" value="1"/>
</dbReference>
<dbReference type="PROSITE" id="PS01360">
    <property type="entry name" value="ZF_MYND_1"/>
    <property type="match status" value="1"/>
</dbReference>
<dbReference type="PROSITE" id="PS50865">
    <property type="entry name" value="ZF_MYND_2"/>
    <property type="match status" value="1"/>
</dbReference>
<sequence length="440" mass="50344">MGDLELLLPGEAEVLVRGLRSFPLREMGSEGWNQQHENLEKLNMQAILDATVSQGEPIQELLVTHGKVPTLVEELIAVEMWKQKVFPVFCRVEDFKPQNTFPIYMVVHHEASIINLLETVFFHKEVCESAEDTVLDLVDYCHRKLTLLVAQSGCGGPPEGEGSQDSNPMQELQKQAELMEFEIALKALSVLRYITDCVDSLSLSTLSRMLSTHNLPCLLVELLEHSPWSRREGGKLQQFEGSRWHTVAPSEQQKLSKLDGQVWIALYNLLLSPEAQARYCLTSFAKGRLLKLRAFLTDTLLDQLPNLAHLQSFLAHLTLTETQPPKKDLVLEQIPEIWERLERENRGKWQAIAKHQLQHVFSPSEQDLRLQARRWAETYRLDVLEAVAPERPRCAYCSAEASKRCSRCQNEWYCCRECQVKHWEKHGKTCVLAAQGDRAK</sequence>
<protein>
    <recommendedName>
        <fullName evidence="12">Zinc finger MYND domain-containing protein 10</fullName>
    </recommendedName>
    <alternativeName>
        <fullName evidence="11">Protein BLu</fullName>
    </alternativeName>
</protein>
<proteinExistence type="evidence at protein level"/>
<accession>O75800</accession>
<accession>A6NK41</accession>
<accession>B3KU54</accession>
<accession>O14570</accession>
<accession>O75801</accession>
<accession>Q53FE6</accession>
<accession>Q8N4R6</accession>
<accession>Q8NDN6</accession>
<evidence type="ECO:0000250" key="1">
    <source>
        <dbReference type="UniProtKB" id="Q5FWU8"/>
    </source>
</evidence>
<evidence type="ECO:0000250" key="2">
    <source>
        <dbReference type="UniProtKB" id="Q6AXZ5"/>
    </source>
</evidence>
<evidence type="ECO:0000250" key="3">
    <source>
        <dbReference type="UniProtKB" id="Q99ML0"/>
    </source>
</evidence>
<evidence type="ECO:0000255" key="4">
    <source>
        <dbReference type="PROSITE-ProRule" id="PRU00134"/>
    </source>
</evidence>
<evidence type="ECO:0000269" key="5">
    <source>
    </source>
</evidence>
<evidence type="ECO:0000269" key="6">
    <source>
    </source>
</evidence>
<evidence type="ECO:0000269" key="7">
    <source>
    </source>
</evidence>
<evidence type="ECO:0000269" key="8">
    <source>
    </source>
</evidence>
<evidence type="ECO:0000269" key="9">
    <source>
    </source>
</evidence>
<evidence type="ECO:0000269" key="10">
    <source ref="1"/>
</evidence>
<evidence type="ECO:0000303" key="11">
    <source ref="1"/>
</evidence>
<evidence type="ECO:0000305" key="12"/>
<evidence type="ECO:0000312" key="13">
    <source>
        <dbReference type="HGNC" id="HGNC:19412"/>
    </source>
</evidence>
<evidence type="ECO:0007829" key="14">
    <source>
        <dbReference type="PDB" id="2D8Q"/>
    </source>
</evidence>
<evidence type="ECO:0007829" key="15">
    <source>
        <dbReference type="PDB" id="2DAN"/>
    </source>
</evidence>
<comment type="function">
    <text evidence="3 6 7">Plays a role in axonemal structure organization and motility (PubMed:23891469, PubMed:23891471). Involved in axonemal pre-assembly of inner and outer dynein arms (IDA and ODA, respectively) for proper axoneme building for cilia motility (By similarity). May act by indirectly regulating transcription of dynein proteins (By similarity).</text>
</comment>
<comment type="subunit">
    <text evidence="6 7 9">Interacts (via C-terminus) with DNAAF11 (via CS domain); this interaction stabilizes DNAAF11 at the protein level (PubMed:23891469, PubMed:23891471, PubMed:29601588). Interacts (via C-terminus) with DNAL1; this interaction stabilizes DNAL1 at the protein level (PubMed:29601588). Interacts with DNAAF4, HSPA8, IQUB, RUVBL2 and DYNTL5 (PubMed:29601588).</text>
</comment>
<comment type="interaction">
    <interactant intactId="EBI-747061">
        <id>O75800</id>
    </interactant>
    <interactant intactId="EBI-2836538">
        <id>P51861</id>
        <label>CDR1</label>
    </interactant>
    <organismsDiffer>false</organismsDiffer>
    <experiments>6</experiments>
</comment>
<comment type="interaction">
    <interactant intactId="EBI-747061">
        <id>O75800</id>
    </interactant>
    <interactant intactId="EBI-3867333">
        <id>A8MQ03</id>
        <label>CYSRT1</label>
    </interactant>
    <organismsDiffer>false</organismsDiffer>
    <experiments>3</experiments>
</comment>
<comment type="interaction">
    <interactant intactId="EBI-747061">
        <id>O75800</id>
    </interactant>
    <interactant intactId="EBI-353901">
        <id>Q7L2H7</id>
        <label>EIF3M</label>
    </interactant>
    <organismsDiffer>false</organismsDiffer>
    <experiments>3</experiments>
</comment>
<comment type="interaction">
    <interactant intactId="EBI-747061">
        <id>O75800</id>
    </interactant>
    <interactant intactId="EBI-10220102">
        <id>B7ZLH0</id>
        <label>FAM22F</label>
    </interactant>
    <organismsDiffer>false</organismsDiffer>
    <experiments>3</experiments>
</comment>
<comment type="interaction">
    <interactant intactId="EBI-747061">
        <id>O75800</id>
    </interactant>
    <interactant intactId="EBI-10189681">
        <id>Q96FT9</id>
        <label>IFT43</label>
    </interactant>
    <organismsDiffer>false</organismsDiffer>
    <experiments>3</experiments>
</comment>
<comment type="interaction">
    <interactant intactId="EBI-747061">
        <id>O75800</id>
    </interactant>
    <interactant intactId="EBI-11944538">
        <id>Q96FT9-2</id>
        <label>IFT43</label>
    </interactant>
    <organismsDiffer>false</organismsDiffer>
    <experiments>3</experiments>
</comment>
<comment type="interaction">
    <interactant intactId="EBI-747061">
        <id>O75800</id>
    </interactant>
    <interactant intactId="EBI-11522433">
        <id>Q5JR59-3</id>
        <label>MTUS2</label>
    </interactant>
    <organismsDiffer>false</organismsDiffer>
    <experiments>3</experiments>
</comment>
<comment type="interaction">
    <interactant intactId="EBI-747061">
        <id>O75800</id>
    </interactant>
    <interactant intactId="EBI-10178410">
        <id>Q86Y26</id>
        <label>NUTM1</label>
    </interactant>
    <organismsDiffer>false</organismsDiffer>
    <experiments>3</experiments>
</comment>
<comment type="interaction">
    <interactant intactId="EBI-747061">
        <id>O75800</id>
    </interactant>
    <interactant intactId="EBI-741332">
        <id>P57052</id>
        <label>RBM11</label>
    </interactant>
    <organismsDiffer>false</organismsDiffer>
    <experiments>3</experiments>
</comment>
<comment type="interaction">
    <interactant intactId="EBI-747061">
        <id>O75800</id>
    </interactant>
    <interactant intactId="EBI-10329449">
        <id>Q9Y5W9</id>
        <label>SNX11</label>
    </interactant>
    <organismsDiffer>false</organismsDiffer>
    <experiments>3</experiments>
</comment>
<comment type="interaction">
    <interactant intactId="EBI-747061">
        <id>O75800</id>
    </interactant>
    <interactant intactId="EBI-297043">
        <id>Q99593</id>
        <label>TBX5</label>
    </interactant>
    <organismsDiffer>false</organismsDiffer>
    <experiments>3</experiments>
</comment>
<comment type="interaction">
    <interactant intactId="EBI-747061">
        <id>O75800</id>
    </interactant>
    <interactant intactId="EBI-13636688">
        <id>P15884-3</id>
        <label>TCF4</label>
    </interactant>
    <organismsDiffer>false</organismsDiffer>
    <experiments>3</experiments>
</comment>
<comment type="interaction">
    <interactant intactId="EBI-747061">
        <id>O75800</id>
    </interactant>
    <interactant intactId="EBI-739485">
        <id>Q9Y3Q8</id>
        <label>TSC22D4</label>
    </interactant>
    <organismsDiffer>false</organismsDiffer>
    <experiments>5</experiments>
</comment>
<comment type="interaction">
    <interactant intactId="EBI-747061">
        <id>O75800</id>
    </interactant>
    <interactant intactId="EBI-3867685">
        <id>Q96G27</id>
        <label>WBP1</label>
    </interactant>
    <organismsDiffer>false</organismsDiffer>
    <experiments>3</experiments>
</comment>
<comment type="subcellular location">
    <subcellularLocation>
        <location evidence="2">Cytoplasm</location>
    </subcellularLocation>
    <subcellularLocation>
        <location evidence="2">Cytoplasm</location>
        <location evidence="2">Cytoskeleton</location>
        <location evidence="2">Microtubule organizing center</location>
        <location evidence="2">Centrosome</location>
        <location evidence="2">Centriolar satellite</location>
    </subcellularLocation>
    <subcellularLocation>
        <location evidence="3">Apical cell membrane</location>
    </subcellularLocation>
    <subcellularLocation>
        <location evidence="1">Dynein axonemal particle</location>
    </subcellularLocation>
</comment>
<comment type="alternative products">
    <event type="alternative splicing"/>
    <isoform>
        <id>O75800-1</id>
        <name>1</name>
        <name>Lung</name>
        <sequence type="displayed"/>
    </isoform>
    <isoform>
        <id>O75800-2</id>
        <name>2</name>
        <name>Testis</name>
        <sequence type="described" ref="VSP_003328"/>
    </isoform>
</comment>
<comment type="disease" evidence="6 7 8 9">
    <disease id="DI-03904">
        <name>Ciliary dyskinesia, primary, 22</name>
        <acronym>CILD22</acronym>
        <description>A disorder characterized by abnormalities of motile cilia. Respiratory infections leading to chronic inflammation and bronchiectasis are recurrent, due to defects in the respiratory cilia. Patients may exhibit randomization of left-right body asymmetry and situs inversus, due to dysfunction of monocilia at the embryonic node. Primary ciliary dyskinesia associated with situs inversus is referred to as Kartagener syndrome.</description>
        <dbReference type="MIM" id="615444"/>
    </disease>
    <text>The disease is caused by variants affecting the gene represented in this entry.</text>
</comment>
<comment type="similarity">
    <text evidence="12">Belongs to the ZMYND10 family.</text>
</comment>
<comment type="sequence caution" evidence="12">
    <conflict type="erroneous gene model prediction">
        <sequence resource="EMBL-CDS" id="AAB67311"/>
    </conflict>
</comment>
<name>ZMY10_HUMAN</name>
<reference key="1">
    <citation type="submission" date="1996-09" db="EMBL/GenBank/DDBJ databases">
        <title>A novel gene (BLu) that resides in the lung cancer region on chromosome 3p21.3 has the MYND Zn finger-like module.</title>
        <authorList>
            <person name="Duh F.-M."/>
            <person name="Latif F."/>
            <person name="Bader S."/>
            <person name="Sekido Y."/>
            <person name="Kuzmin I."/>
            <person name="Minna J.D."/>
            <person name="Koonin E."/>
            <person name="Lerman M.I."/>
        </authorList>
    </citation>
    <scope>NUCLEOTIDE SEQUENCE [MRNA] (ISOFORMS 1 AND 2)</scope>
    <scope>VARIANT TRP-369</scope>
    <source>
        <tissue>Lung</tissue>
        <tissue>Testis</tissue>
    </source>
</reference>
<reference key="2">
    <citation type="journal article" date="2007" name="BMC Genomics">
        <title>The full-ORF clone resource of the German cDNA consortium.</title>
        <authorList>
            <person name="Bechtel S."/>
            <person name="Rosenfelder H."/>
            <person name="Duda A."/>
            <person name="Schmidt C.P."/>
            <person name="Ernst U."/>
            <person name="Wellenreuther R."/>
            <person name="Mehrle A."/>
            <person name="Schuster C."/>
            <person name="Bahr A."/>
            <person name="Bloecker H."/>
            <person name="Heubner D."/>
            <person name="Hoerlein A."/>
            <person name="Michel G."/>
            <person name="Wedler H."/>
            <person name="Koehrer K."/>
            <person name="Ottenwaelder B."/>
            <person name="Poustka A."/>
            <person name="Wiemann S."/>
            <person name="Schupp I."/>
        </authorList>
    </citation>
    <scope>NUCLEOTIDE SEQUENCE [LARGE SCALE MRNA] (ISOFORM 1)</scope>
    <source>
        <tissue>Kidney</tissue>
    </source>
</reference>
<reference key="3">
    <citation type="journal article" date="2004" name="Nat. Genet.">
        <title>Complete sequencing and characterization of 21,243 full-length human cDNAs.</title>
        <authorList>
            <person name="Ota T."/>
            <person name="Suzuki Y."/>
            <person name="Nishikawa T."/>
            <person name="Otsuki T."/>
            <person name="Sugiyama T."/>
            <person name="Irie R."/>
            <person name="Wakamatsu A."/>
            <person name="Hayashi K."/>
            <person name="Sato H."/>
            <person name="Nagai K."/>
            <person name="Kimura K."/>
            <person name="Makita H."/>
            <person name="Sekine M."/>
            <person name="Obayashi M."/>
            <person name="Nishi T."/>
            <person name="Shibahara T."/>
            <person name="Tanaka T."/>
            <person name="Ishii S."/>
            <person name="Yamamoto J."/>
            <person name="Saito K."/>
            <person name="Kawai Y."/>
            <person name="Isono Y."/>
            <person name="Nakamura Y."/>
            <person name="Nagahari K."/>
            <person name="Murakami K."/>
            <person name="Yasuda T."/>
            <person name="Iwayanagi T."/>
            <person name="Wagatsuma M."/>
            <person name="Shiratori A."/>
            <person name="Sudo H."/>
            <person name="Hosoiri T."/>
            <person name="Kaku Y."/>
            <person name="Kodaira H."/>
            <person name="Kondo H."/>
            <person name="Sugawara M."/>
            <person name="Takahashi M."/>
            <person name="Kanda K."/>
            <person name="Yokoi T."/>
            <person name="Furuya T."/>
            <person name="Kikkawa E."/>
            <person name="Omura Y."/>
            <person name="Abe K."/>
            <person name="Kamihara K."/>
            <person name="Katsuta N."/>
            <person name="Sato K."/>
            <person name="Tanikawa M."/>
            <person name="Yamazaki M."/>
            <person name="Ninomiya K."/>
            <person name="Ishibashi T."/>
            <person name="Yamashita H."/>
            <person name="Murakawa K."/>
            <person name="Fujimori K."/>
            <person name="Tanai H."/>
            <person name="Kimata M."/>
            <person name="Watanabe M."/>
            <person name="Hiraoka S."/>
            <person name="Chiba Y."/>
            <person name="Ishida S."/>
            <person name="Ono Y."/>
            <person name="Takiguchi S."/>
            <person name="Watanabe S."/>
            <person name="Yosida M."/>
            <person name="Hotuta T."/>
            <person name="Kusano J."/>
            <person name="Kanehori K."/>
            <person name="Takahashi-Fujii A."/>
            <person name="Hara H."/>
            <person name="Tanase T.-O."/>
            <person name="Nomura Y."/>
            <person name="Togiya S."/>
            <person name="Komai F."/>
            <person name="Hara R."/>
            <person name="Takeuchi K."/>
            <person name="Arita M."/>
            <person name="Imose N."/>
            <person name="Musashino K."/>
            <person name="Yuuki H."/>
            <person name="Oshima A."/>
            <person name="Sasaki N."/>
            <person name="Aotsuka S."/>
            <person name="Yoshikawa Y."/>
            <person name="Matsunawa H."/>
            <person name="Ichihara T."/>
            <person name="Shiohata N."/>
            <person name="Sano S."/>
            <person name="Moriya S."/>
            <person name="Momiyama H."/>
            <person name="Satoh N."/>
            <person name="Takami S."/>
            <person name="Terashima Y."/>
            <person name="Suzuki O."/>
            <person name="Nakagawa S."/>
            <person name="Senoh A."/>
            <person name="Mizoguchi H."/>
            <person name="Goto Y."/>
            <person name="Shimizu F."/>
            <person name="Wakebe H."/>
            <person name="Hishigaki H."/>
            <person name="Watanabe T."/>
            <person name="Sugiyama A."/>
            <person name="Takemoto M."/>
            <person name="Kawakami B."/>
            <person name="Yamazaki M."/>
            <person name="Watanabe K."/>
            <person name="Kumagai A."/>
            <person name="Itakura S."/>
            <person name="Fukuzumi Y."/>
            <person name="Fujimori Y."/>
            <person name="Komiyama M."/>
            <person name="Tashiro H."/>
            <person name="Tanigami A."/>
            <person name="Fujiwara T."/>
            <person name="Ono T."/>
            <person name="Yamada K."/>
            <person name="Fujii Y."/>
            <person name="Ozaki K."/>
            <person name="Hirao M."/>
            <person name="Ohmori Y."/>
            <person name="Kawabata A."/>
            <person name="Hikiji T."/>
            <person name="Kobatake N."/>
            <person name="Inagaki H."/>
            <person name="Ikema Y."/>
            <person name="Okamoto S."/>
            <person name="Okitani R."/>
            <person name="Kawakami T."/>
            <person name="Noguchi S."/>
            <person name="Itoh T."/>
            <person name="Shigeta K."/>
            <person name="Senba T."/>
            <person name="Matsumura K."/>
            <person name="Nakajima Y."/>
            <person name="Mizuno T."/>
            <person name="Morinaga M."/>
            <person name="Sasaki M."/>
            <person name="Togashi T."/>
            <person name="Oyama M."/>
            <person name="Hata H."/>
            <person name="Watanabe M."/>
            <person name="Komatsu T."/>
            <person name="Mizushima-Sugano J."/>
            <person name="Satoh T."/>
            <person name="Shirai Y."/>
            <person name="Takahashi Y."/>
            <person name="Nakagawa K."/>
            <person name="Okumura K."/>
            <person name="Nagase T."/>
            <person name="Nomura N."/>
            <person name="Kikuchi H."/>
            <person name="Masuho Y."/>
            <person name="Yamashita R."/>
            <person name="Nakai K."/>
            <person name="Yada T."/>
            <person name="Nakamura Y."/>
            <person name="Ohara O."/>
            <person name="Isogai T."/>
            <person name="Sugano S."/>
        </authorList>
    </citation>
    <scope>NUCLEOTIDE SEQUENCE [LARGE SCALE MRNA] (ISOFORM 1)</scope>
    <source>
        <tissue>Brain</tissue>
    </source>
</reference>
<reference key="4">
    <citation type="submission" date="2005-04" db="EMBL/GenBank/DDBJ databases">
        <authorList>
            <person name="Suzuki Y."/>
            <person name="Sugano S."/>
            <person name="Totoki Y."/>
            <person name="Toyoda A."/>
            <person name="Takeda T."/>
            <person name="Sakaki Y."/>
            <person name="Tanaka A."/>
            <person name="Yokoyama S."/>
        </authorList>
    </citation>
    <scope>NUCLEOTIDE SEQUENCE [LARGE SCALE MRNA] (ISOFORM 1)</scope>
    <source>
        <tissue>Testis</tissue>
    </source>
</reference>
<reference key="5">
    <citation type="journal article" date="2006" name="Nature">
        <title>The DNA sequence, annotation and analysis of human chromosome 3.</title>
        <authorList>
            <person name="Muzny D.M."/>
            <person name="Scherer S.E."/>
            <person name="Kaul R."/>
            <person name="Wang J."/>
            <person name="Yu J."/>
            <person name="Sudbrak R."/>
            <person name="Buhay C.J."/>
            <person name="Chen R."/>
            <person name="Cree A."/>
            <person name="Ding Y."/>
            <person name="Dugan-Rocha S."/>
            <person name="Gill R."/>
            <person name="Gunaratne P."/>
            <person name="Harris R.A."/>
            <person name="Hawes A.C."/>
            <person name="Hernandez J."/>
            <person name="Hodgson A.V."/>
            <person name="Hume J."/>
            <person name="Jackson A."/>
            <person name="Khan Z.M."/>
            <person name="Kovar-Smith C."/>
            <person name="Lewis L.R."/>
            <person name="Lozado R.J."/>
            <person name="Metzker M.L."/>
            <person name="Milosavljevic A."/>
            <person name="Miner G.R."/>
            <person name="Morgan M.B."/>
            <person name="Nazareth L.V."/>
            <person name="Scott G."/>
            <person name="Sodergren E."/>
            <person name="Song X.-Z."/>
            <person name="Steffen D."/>
            <person name="Wei S."/>
            <person name="Wheeler D.A."/>
            <person name="Wright M.W."/>
            <person name="Worley K.C."/>
            <person name="Yuan Y."/>
            <person name="Zhang Z."/>
            <person name="Adams C.Q."/>
            <person name="Ansari-Lari M.A."/>
            <person name="Ayele M."/>
            <person name="Brown M.J."/>
            <person name="Chen G."/>
            <person name="Chen Z."/>
            <person name="Clendenning J."/>
            <person name="Clerc-Blankenburg K.P."/>
            <person name="Chen R."/>
            <person name="Chen Z."/>
            <person name="Davis C."/>
            <person name="Delgado O."/>
            <person name="Dinh H.H."/>
            <person name="Dong W."/>
            <person name="Draper H."/>
            <person name="Ernst S."/>
            <person name="Fu G."/>
            <person name="Gonzalez-Garay M.L."/>
            <person name="Garcia D.K."/>
            <person name="Gillett W."/>
            <person name="Gu J."/>
            <person name="Hao B."/>
            <person name="Haugen E."/>
            <person name="Havlak P."/>
            <person name="He X."/>
            <person name="Hennig S."/>
            <person name="Hu S."/>
            <person name="Huang W."/>
            <person name="Jackson L.R."/>
            <person name="Jacob L.S."/>
            <person name="Kelly S.H."/>
            <person name="Kube M."/>
            <person name="Levy R."/>
            <person name="Li Z."/>
            <person name="Liu B."/>
            <person name="Liu J."/>
            <person name="Liu W."/>
            <person name="Lu J."/>
            <person name="Maheshwari M."/>
            <person name="Nguyen B.-V."/>
            <person name="Okwuonu G.O."/>
            <person name="Palmeiri A."/>
            <person name="Pasternak S."/>
            <person name="Perez L.M."/>
            <person name="Phelps K.A."/>
            <person name="Plopper F.J."/>
            <person name="Qiang B."/>
            <person name="Raymond C."/>
            <person name="Rodriguez R."/>
            <person name="Saenphimmachak C."/>
            <person name="Santibanez J."/>
            <person name="Shen H."/>
            <person name="Shen Y."/>
            <person name="Subramanian S."/>
            <person name="Tabor P.E."/>
            <person name="Verduzco D."/>
            <person name="Waldron L."/>
            <person name="Wang J."/>
            <person name="Wang J."/>
            <person name="Wang Q."/>
            <person name="Williams G.A."/>
            <person name="Wong G.K.-S."/>
            <person name="Yao Z."/>
            <person name="Zhang J."/>
            <person name="Zhang X."/>
            <person name="Zhao G."/>
            <person name="Zhou J."/>
            <person name="Zhou Y."/>
            <person name="Nelson D."/>
            <person name="Lehrach H."/>
            <person name="Reinhardt R."/>
            <person name="Naylor S.L."/>
            <person name="Yang H."/>
            <person name="Olson M."/>
            <person name="Weinstock G."/>
            <person name="Gibbs R.A."/>
        </authorList>
    </citation>
    <scope>NUCLEOTIDE SEQUENCE [LARGE SCALE GENOMIC DNA]</scope>
</reference>
<reference key="6">
    <citation type="submission" date="2005-07" db="EMBL/GenBank/DDBJ databases">
        <authorList>
            <person name="Mural R.J."/>
            <person name="Istrail S."/>
            <person name="Sutton G.G."/>
            <person name="Florea L."/>
            <person name="Halpern A.L."/>
            <person name="Mobarry C.M."/>
            <person name="Lippert R."/>
            <person name="Walenz B."/>
            <person name="Shatkay H."/>
            <person name="Dew I."/>
            <person name="Miller J.R."/>
            <person name="Flanigan M.J."/>
            <person name="Edwards N.J."/>
            <person name="Bolanos R."/>
            <person name="Fasulo D."/>
            <person name="Halldorsson B.V."/>
            <person name="Hannenhalli S."/>
            <person name="Turner R."/>
            <person name="Yooseph S."/>
            <person name="Lu F."/>
            <person name="Nusskern D.R."/>
            <person name="Shue B.C."/>
            <person name="Zheng X.H."/>
            <person name="Zhong F."/>
            <person name="Delcher A.L."/>
            <person name="Huson D.H."/>
            <person name="Kravitz S.A."/>
            <person name="Mouchard L."/>
            <person name="Reinert K."/>
            <person name="Remington K.A."/>
            <person name="Clark A.G."/>
            <person name="Waterman M.S."/>
            <person name="Eichler E.E."/>
            <person name="Adams M.D."/>
            <person name="Hunkapiller M.W."/>
            <person name="Myers E.W."/>
            <person name="Venter J.C."/>
        </authorList>
    </citation>
    <scope>NUCLEOTIDE SEQUENCE [LARGE SCALE GENOMIC DNA]</scope>
</reference>
<reference key="7">
    <citation type="journal article" date="2004" name="Genome Res.">
        <title>The status, quality, and expansion of the NIH full-length cDNA project: the Mammalian Gene Collection (MGC).</title>
        <authorList>
            <consortium name="The MGC Project Team"/>
        </authorList>
    </citation>
    <scope>NUCLEOTIDE SEQUENCE [LARGE SCALE MRNA] (ISOFORM 1)</scope>
    <source>
        <tissue>Brain</tissue>
    </source>
</reference>
<reference key="8">
    <citation type="journal article" date="2000" name="Cancer Res.">
        <title>The 630-kb lung cancer homozygous deletion region on human chromosome 3p21.3: identification and evaluation of the resident candidate tumor suppressor genes.</title>
        <authorList>
            <consortium name="The international lung cancer chromosome 3p21.3 tumor suppressor gene consortium"/>
            <person name="Lerman M.I."/>
            <person name="Minna J.D."/>
        </authorList>
    </citation>
    <scope>DISCUSSION OF SEQUENCE</scope>
    <scope>VARIANT GLN-407</scope>
</reference>
<reference key="9">
    <citation type="submission" date="2006-06" db="PDB data bank">
        <title>Solution structure of the MYND domain of the human zinc finger MYND domain-containing protein 10.</title>
        <authorList>
            <consortium name="RIKEN structural genomics initiative (RSGI)"/>
        </authorList>
    </citation>
    <scope>STRUCTURE BY NMR OF 384-440</scope>
</reference>
<reference key="10">
    <citation type="journal article" date="2013" name="Am. J. Hum. Genet.">
        <title>ZMYND10 is mutated in primary ciliary dyskinesia and interacts with LRRC6.</title>
        <authorList>
            <person name="Zariwala M.A."/>
            <person name="Gee H.Y."/>
            <person name="Kurkowiak M."/>
            <person name="Al-Mutairi D.A."/>
            <person name="Leigh M.W."/>
            <person name="Hurd T.W."/>
            <person name="Hjeij R."/>
            <person name="Dell S.D."/>
            <person name="Chaki M."/>
            <person name="Dougherty G.W."/>
            <person name="Adan M."/>
            <person name="Spear P.C."/>
            <person name="Esteve-Rudd J."/>
            <person name="Loges N.T."/>
            <person name="Rosenfeld M."/>
            <person name="Diaz K.A."/>
            <person name="Olbrich H."/>
            <person name="Wolf W.E."/>
            <person name="Sheridan E."/>
            <person name="Batten T.F."/>
            <person name="Halbritter J."/>
            <person name="Porath J.D."/>
            <person name="Kohl S."/>
            <person name="Lovric S."/>
            <person name="Hwang D.Y."/>
            <person name="Pittman J.E."/>
            <person name="Burns K.A."/>
            <person name="Ferkol T.W."/>
            <person name="Sagel S.D."/>
            <person name="Olivier K.N."/>
            <person name="Morgan L.C."/>
            <person name="Werner C."/>
            <person name="Raidt J."/>
            <person name="Pennekamp P."/>
            <person name="Sun Z."/>
            <person name="Zhou W."/>
            <person name="Airik R."/>
            <person name="Natarajan S."/>
            <person name="Allen S.J."/>
            <person name="Amirav I."/>
            <person name="Wieczorek D."/>
            <person name="Landwehr K."/>
            <person name="Nielsen K."/>
            <person name="Schwerk N."/>
            <person name="Sertic J."/>
            <person name="Kohler G."/>
            <person name="Washburn J."/>
            <person name="Levy S."/>
            <person name="Fan S."/>
            <person name="Koerner-Rettberg C."/>
            <person name="Amselem S."/>
            <person name="Williams D.S."/>
            <person name="Mitchell B.J."/>
            <person name="Drummond I.A."/>
            <person name="Otto E.A."/>
            <person name="Omran H."/>
            <person name="Knowles M.R."/>
            <person name="Hildebrandt F."/>
        </authorList>
    </citation>
    <scope>VARIANTS CILD22 GLY-16; PRO-29; 323-GLN--LYS-440 DEL; 366-GLN--LYS-440 DEL AND CYS-379</scope>
    <scope>CHARACTERIZATION OF VARIANTS CILD22 GLY-16; PRO-29; 323-GLN--LYS-440 DEL; 366-GLN--LYS-440 DEL AND CYS-379</scope>
    <scope>FUNCTION</scope>
    <scope>INTERACTION WITH DNAAF11</scope>
    <scope>INVOLVEMENT IN CILD22</scope>
</reference>
<reference key="11">
    <citation type="journal article" date="2013" name="Am. J. Hum. Genet.">
        <title>Mutations in ZMYND10, a gene essential for proper axonemal assembly of inner and outer dynein arms in humans and flies, cause primary ciliary dyskinesia.</title>
        <authorList>
            <person name="Moore D.J."/>
            <person name="Onoufriadis A."/>
            <person name="Shoemark A."/>
            <person name="Simpson M.A."/>
            <person name="Zur Lage P.I."/>
            <person name="de Castro S.C."/>
            <person name="Bartoloni L."/>
            <person name="Gallone G."/>
            <person name="Petridi S."/>
            <person name="Woollard W.J."/>
            <person name="Antony D."/>
            <person name="Schmidts M."/>
            <person name="Didonna T."/>
            <person name="Makrythanasis P."/>
            <person name="Bevillard J."/>
            <person name="Mongan N.P."/>
            <person name="Djakow J."/>
            <person name="Pals G."/>
            <person name="Lucas J.S."/>
            <person name="Marthin J.K."/>
            <person name="Nielsen K.G."/>
            <person name="Santoni F."/>
            <person name="Guipponi M."/>
            <person name="Hogg C."/>
            <person name="Antonarakis S.E."/>
            <person name="Emes R.D."/>
            <person name="Chung E.M."/>
            <person name="Greene N.D."/>
            <person name="Blouin J.L."/>
            <person name="Jarman A.P."/>
            <person name="Mitchison H.M."/>
        </authorList>
    </citation>
    <scope>VARIANTS CILD22 GLY-16; PRO-39 AND PRO-266</scope>
    <scope>FUNCTION</scope>
    <scope>INTERACTION WITH DNAAF11</scope>
</reference>
<reference key="12">
    <citation type="journal article" date="2014" name="Eur. Respir. J.">
        <title>Ciliary beat pattern and frequency in genetic variants of primary ciliary dyskinesia.</title>
        <authorList>
            <person name="Raidt J."/>
            <person name="Wallmeier J."/>
            <person name="Hjeij R."/>
            <person name="Onnebrink J.G."/>
            <person name="Pennekamp P."/>
            <person name="Loges N.T."/>
            <person name="Olbrich H."/>
            <person name="Haeffner K."/>
            <person name="Dougherty G.W."/>
            <person name="Omran H."/>
            <person name="Werner C."/>
        </authorList>
    </citation>
    <scope>INVOLVEMENT IN CILD22</scope>
</reference>
<reference key="13">
    <citation type="journal article" date="2018" name="PLoS Genet.">
        <title>ZMYND10 stabilizes intermediate chain proteins in the cytoplasmic pre-assembly of dynein arms.</title>
        <authorList>
            <person name="Cho K.J."/>
            <person name="Noh S.H."/>
            <person name="Han S.M."/>
            <person name="Choi W.I."/>
            <person name="Kim H.Y."/>
            <person name="Yu S."/>
            <person name="Lee J.S."/>
            <person name="Rim J.H."/>
            <person name="Lee M.G."/>
            <person name="Hildebrandt F."/>
            <person name="Gee H.Y."/>
        </authorList>
    </citation>
    <scope>VARIANT CILD22 366-GLN--LYS-440 DEL</scope>
    <scope>CHARACTERIZATION OF VARIANT CILD22 366-GLN--LYS-440 DEL</scope>
    <scope>INTERACTION WITH DNAAF4; DNAL1; HSPA8; IQUB; DNAAF11; RUVBL2 AND DYNTL5</scope>
</reference>
<feature type="chain" id="PRO_0000218314" description="Zinc finger MYND domain-containing protein 10">
    <location>
        <begin position="1"/>
        <end position="440"/>
    </location>
</feature>
<feature type="zinc finger region" description="MYND-type" evidence="4">
    <location>
        <begin position="394"/>
        <end position="430"/>
    </location>
</feature>
<feature type="region of interest" description="Interaction with DNAAF11">
    <location>
        <begin position="366"/>
        <end position="440"/>
    </location>
</feature>
<feature type="binding site" evidence="4">
    <location>
        <position position="394"/>
    </location>
    <ligand>
        <name>Zn(2+)</name>
        <dbReference type="ChEBI" id="CHEBI:29105"/>
        <label>1</label>
    </ligand>
</feature>
<feature type="binding site" evidence="4">
    <location>
        <position position="397"/>
    </location>
    <ligand>
        <name>Zn(2+)</name>
        <dbReference type="ChEBI" id="CHEBI:29105"/>
        <label>1</label>
    </ligand>
</feature>
<feature type="binding site" evidence="4">
    <location>
        <position position="405"/>
    </location>
    <ligand>
        <name>Zn(2+)</name>
        <dbReference type="ChEBI" id="CHEBI:29105"/>
        <label>2</label>
    </ligand>
</feature>
<feature type="binding site" evidence="4">
    <location>
        <position position="408"/>
    </location>
    <ligand>
        <name>Zn(2+)</name>
        <dbReference type="ChEBI" id="CHEBI:29105"/>
        <label>2</label>
    </ligand>
</feature>
<feature type="binding site" evidence="4">
    <location>
        <position position="414"/>
    </location>
    <ligand>
        <name>Zn(2+)</name>
        <dbReference type="ChEBI" id="CHEBI:29105"/>
        <label>1</label>
    </ligand>
</feature>
<feature type="binding site" evidence="4">
    <location>
        <position position="418"/>
    </location>
    <ligand>
        <name>Zn(2+)</name>
        <dbReference type="ChEBI" id="CHEBI:29105"/>
        <label>1</label>
    </ligand>
</feature>
<feature type="binding site" evidence="4">
    <location>
        <position position="426"/>
    </location>
    <ligand>
        <name>Zn(2+)</name>
        <dbReference type="ChEBI" id="CHEBI:29105"/>
        <label>2</label>
    </ligand>
</feature>
<feature type="binding site" evidence="4">
    <location>
        <position position="430"/>
    </location>
    <ligand>
        <name>Zn(2+)</name>
        <dbReference type="ChEBI" id="CHEBI:29105"/>
        <label>2</label>
    </ligand>
</feature>
<feature type="splice variant" id="VSP_003328" description="In isoform 2." evidence="11">
    <original>SLSLSTLSRMLSTHNLPCLLVELLEHSPWSRREGG</original>
    <variation>RQWSVSQPPQLAHLKRIQRLHPVCWFLSPG</variation>
    <location>
        <begin position="200"/>
        <end position="234"/>
    </location>
</feature>
<feature type="sequence variant" id="VAR_070184" description="In CILD22; no loss of interaction with DNAAF11; dbSNP:rs138815960." evidence="6 7">
    <original>V</original>
    <variation>G</variation>
    <location>
        <position position="16"/>
    </location>
</feature>
<feature type="sequence variant" id="VAR_070185" description="In CILD22; no loss of interaction with DNAAF11; dbSNP:rs587621539." evidence="6">
    <original>S</original>
    <variation>P</variation>
    <location>
        <position position="29"/>
    </location>
</feature>
<feature type="sequence variant" id="VAR_070186" description="In CILD22." evidence="7">
    <original>L</original>
    <variation>P</variation>
    <location>
        <position position="39"/>
    </location>
</feature>
<feature type="sequence variant" id="VAR_070187" description="In CILD22; dbSNP:rs200913791." evidence="7">
    <original>L</original>
    <variation>P</variation>
    <location>
        <position position="266"/>
    </location>
</feature>
<feature type="sequence variant" id="VAR_080482" description="In CILD22; loss of interaction with DNAAF11." evidence="6">
    <location>
        <begin position="323"/>
        <end position="440"/>
    </location>
</feature>
<feature type="sequence variant" id="VAR_080483" description="In CILD22; loss of interaction with DNAL1." evidence="6 9">
    <location>
        <begin position="366"/>
        <end position="440"/>
    </location>
</feature>
<feature type="sequence variant" id="VAR_070188" description="In dbSNP:rs142613783." evidence="10">
    <original>R</original>
    <variation>W</variation>
    <location>
        <position position="369"/>
    </location>
</feature>
<feature type="sequence variant" id="VAR_070189" description="In CILD22; no loss of interaction with DNAAF11; dbSNP:rs753061612." evidence="6">
    <original>Y</original>
    <variation>C</variation>
    <location>
        <position position="379"/>
    </location>
</feature>
<feature type="sequence variant" id="VAR_014227" description="In non-small cell lung cancer cell lines; dbSNP:rs182064110." evidence="5">
    <original>R</original>
    <variation>Q</variation>
    <location>
        <position position="407"/>
    </location>
</feature>
<feature type="sequence conflict" description="In Ref. 2; CAD38688." evidence="12" ref="2">
    <original>Q</original>
    <variation>R</variation>
    <location>
        <position position="35"/>
    </location>
</feature>
<feature type="sequence conflict" description="In Ref. 3; BAG53316." evidence="12" ref="3">
    <original>K</original>
    <variation>E</variation>
    <location>
        <position position="82"/>
    </location>
</feature>
<feature type="sequence conflict" description="In Ref. 4; BAD97063." evidence="12" ref="4">
    <original>V</original>
    <variation>A</variation>
    <location>
        <position position="134"/>
    </location>
</feature>
<feature type="strand" evidence="14">
    <location>
        <begin position="395"/>
        <end position="397"/>
    </location>
</feature>
<feature type="turn" evidence="14">
    <location>
        <begin position="406"/>
        <end position="408"/>
    </location>
</feature>
<feature type="strand" evidence="15">
    <location>
        <begin position="411"/>
        <end position="415"/>
    </location>
</feature>
<feature type="helix" evidence="14">
    <location>
        <begin position="416"/>
        <end position="421"/>
    </location>
</feature>
<feature type="helix" evidence="14">
    <location>
        <begin position="423"/>
        <end position="429"/>
    </location>
</feature>
<organism>
    <name type="scientific">Homo sapiens</name>
    <name type="common">Human</name>
    <dbReference type="NCBI Taxonomy" id="9606"/>
    <lineage>
        <taxon>Eukaryota</taxon>
        <taxon>Metazoa</taxon>
        <taxon>Chordata</taxon>
        <taxon>Craniata</taxon>
        <taxon>Vertebrata</taxon>
        <taxon>Euteleostomi</taxon>
        <taxon>Mammalia</taxon>
        <taxon>Eutheria</taxon>
        <taxon>Euarchontoglires</taxon>
        <taxon>Primates</taxon>
        <taxon>Haplorrhini</taxon>
        <taxon>Catarrhini</taxon>
        <taxon>Hominidae</taxon>
        <taxon>Homo</taxon>
    </lineage>
</organism>